<comment type="function">
    <text evidence="1">Involved in the post-transcriptional modification of the uridine at the wobble position (U34) of tRNA(Lys), tRNA(Glu) and tRNA(Gln). Catalyzes the conversion of 2-thiouridine (S2U-RNA) to 2-selenouridine (Se2U-RNA). Acts in a two-step process involving geranylation of 2-thiouridine (S2U) to S-geranyl-2-thiouridine (geS2U) and subsequent selenation of the latter derivative to 2-selenouridine (Se2U) in the tRNA chain.</text>
</comment>
<comment type="catalytic activity">
    <reaction evidence="1">
        <text>5-methylaminomethyl-2-thiouridine(34) in tRNA + selenophosphate + (2E)-geranyl diphosphate + H2O + H(+) = 5-methylaminomethyl-2-selenouridine(34) in tRNA + (2E)-thiogeraniol + phosphate + diphosphate</text>
        <dbReference type="Rhea" id="RHEA:42716"/>
        <dbReference type="Rhea" id="RHEA-COMP:10195"/>
        <dbReference type="Rhea" id="RHEA-COMP:10196"/>
        <dbReference type="ChEBI" id="CHEBI:15377"/>
        <dbReference type="ChEBI" id="CHEBI:15378"/>
        <dbReference type="ChEBI" id="CHEBI:16144"/>
        <dbReference type="ChEBI" id="CHEBI:33019"/>
        <dbReference type="ChEBI" id="CHEBI:43474"/>
        <dbReference type="ChEBI" id="CHEBI:58057"/>
        <dbReference type="ChEBI" id="CHEBI:74455"/>
        <dbReference type="ChEBI" id="CHEBI:82743"/>
        <dbReference type="ChEBI" id="CHEBI:143703"/>
        <dbReference type="EC" id="2.9.1.3"/>
    </reaction>
    <physiologicalReaction direction="left-to-right" evidence="1">
        <dbReference type="Rhea" id="RHEA:42717"/>
    </physiologicalReaction>
</comment>
<comment type="catalytic activity">
    <reaction evidence="1">
        <text>5-methylaminomethyl-2-thiouridine(34) in tRNA + (2E)-geranyl diphosphate = 5-methylaminomethyl-S-(2E)-geranyl-thiouridine(34) in tRNA + diphosphate</text>
        <dbReference type="Rhea" id="RHEA:14085"/>
        <dbReference type="Rhea" id="RHEA-COMP:10195"/>
        <dbReference type="Rhea" id="RHEA-COMP:14654"/>
        <dbReference type="ChEBI" id="CHEBI:33019"/>
        <dbReference type="ChEBI" id="CHEBI:58057"/>
        <dbReference type="ChEBI" id="CHEBI:74455"/>
        <dbReference type="ChEBI" id="CHEBI:140632"/>
    </reaction>
    <physiologicalReaction direction="left-to-right" evidence="1">
        <dbReference type="Rhea" id="RHEA:14086"/>
    </physiologicalReaction>
</comment>
<comment type="catalytic activity">
    <reaction evidence="1">
        <text>5-methylaminomethyl-S-(2E)-geranyl-thiouridine(34) in tRNA + selenophosphate + H(+) = 5-methylaminomethyl-2-(Se-phospho)selenouridine(34) in tRNA + (2E)-thiogeraniol</text>
        <dbReference type="Rhea" id="RHEA:60172"/>
        <dbReference type="Rhea" id="RHEA-COMP:14654"/>
        <dbReference type="Rhea" id="RHEA-COMP:15523"/>
        <dbReference type="ChEBI" id="CHEBI:15378"/>
        <dbReference type="ChEBI" id="CHEBI:16144"/>
        <dbReference type="ChEBI" id="CHEBI:140632"/>
        <dbReference type="ChEBI" id="CHEBI:143702"/>
        <dbReference type="ChEBI" id="CHEBI:143703"/>
    </reaction>
    <physiologicalReaction direction="left-to-right" evidence="1">
        <dbReference type="Rhea" id="RHEA:60173"/>
    </physiologicalReaction>
</comment>
<comment type="catalytic activity">
    <reaction evidence="1">
        <text>5-methylaminomethyl-2-(Se-phospho)selenouridine(34) in tRNA + H2O = 5-methylaminomethyl-2-selenouridine(34) in tRNA + phosphate</text>
        <dbReference type="Rhea" id="RHEA:60176"/>
        <dbReference type="Rhea" id="RHEA-COMP:10196"/>
        <dbReference type="Rhea" id="RHEA-COMP:15523"/>
        <dbReference type="ChEBI" id="CHEBI:15377"/>
        <dbReference type="ChEBI" id="CHEBI:43474"/>
        <dbReference type="ChEBI" id="CHEBI:82743"/>
        <dbReference type="ChEBI" id="CHEBI:143702"/>
    </reaction>
    <physiologicalReaction direction="left-to-right" evidence="1">
        <dbReference type="Rhea" id="RHEA:60177"/>
    </physiologicalReaction>
</comment>
<comment type="subunit">
    <text evidence="1">Monomer.</text>
</comment>
<comment type="similarity">
    <text evidence="1">Belongs to the SelU family.</text>
</comment>
<accession>B7ME26</accession>
<name>SELU_ECO45</name>
<sequence length="364" mass="41270">MQERHTEQDYRALLIADTPIIDVRAPIEFEQGAMPAAINLPLMNNDERAAVGICYKQQGSDAALALGHKLVAGEIRQQRMDAWRAACLQNPHGILCCARGGQRSHIVQRWLHDAGIDYPLVEGGYKALRQTAIQATIELSQKPIVLIGGCTGCGKTLLVQQQPNGVDLEGLARHRGSAFGRTLQPQLSQASFENLLAAEMLKTDARQNLRLWVLEDESRMIGSNHLPECLRERMTQATIAVVEDPFEIRLERLNEEYFLRMHHDFTHAYGDEQGWQEYCEYLHHGLSAIKRRLGLQRYNELAARLDAALTTQLTTGSTDGHLAWLVPLLEEYYDPMYRYQLEKKAEKVVFRGEWAEVAEWVKAQ</sequence>
<reference key="1">
    <citation type="journal article" date="2009" name="PLoS Genet.">
        <title>Organised genome dynamics in the Escherichia coli species results in highly diverse adaptive paths.</title>
        <authorList>
            <person name="Touchon M."/>
            <person name="Hoede C."/>
            <person name="Tenaillon O."/>
            <person name="Barbe V."/>
            <person name="Baeriswyl S."/>
            <person name="Bidet P."/>
            <person name="Bingen E."/>
            <person name="Bonacorsi S."/>
            <person name="Bouchier C."/>
            <person name="Bouvet O."/>
            <person name="Calteau A."/>
            <person name="Chiapello H."/>
            <person name="Clermont O."/>
            <person name="Cruveiller S."/>
            <person name="Danchin A."/>
            <person name="Diard M."/>
            <person name="Dossat C."/>
            <person name="Karoui M.E."/>
            <person name="Frapy E."/>
            <person name="Garry L."/>
            <person name="Ghigo J.M."/>
            <person name="Gilles A.M."/>
            <person name="Johnson J."/>
            <person name="Le Bouguenec C."/>
            <person name="Lescat M."/>
            <person name="Mangenot S."/>
            <person name="Martinez-Jehanne V."/>
            <person name="Matic I."/>
            <person name="Nassif X."/>
            <person name="Oztas S."/>
            <person name="Petit M.A."/>
            <person name="Pichon C."/>
            <person name="Rouy Z."/>
            <person name="Ruf C.S."/>
            <person name="Schneider D."/>
            <person name="Tourret J."/>
            <person name="Vacherie B."/>
            <person name="Vallenet D."/>
            <person name="Medigue C."/>
            <person name="Rocha E.P.C."/>
            <person name="Denamur E."/>
        </authorList>
    </citation>
    <scope>NUCLEOTIDE SEQUENCE [LARGE SCALE GENOMIC DNA]</scope>
    <source>
        <strain>S88 / ExPEC</strain>
    </source>
</reference>
<dbReference type="EC" id="2.9.1.3" evidence="1"/>
<dbReference type="EMBL" id="CU928161">
    <property type="protein sequence ID" value="CAR01848.1"/>
    <property type="molecule type" value="Genomic_DNA"/>
</dbReference>
<dbReference type="SMR" id="B7ME26"/>
<dbReference type="KEGG" id="ecz:ECS88_0502"/>
<dbReference type="HOGENOM" id="CLU_043456_1_0_6"/>
<dbReference type="Proteomes" id="UP000000747">
    <property type="component" value="Chromosome"/>
</dbReference>
<dbReference type="GO" id="GO:0016765">
    <property type="term" value="F:transferase activity, transferring alkyl or aryl (other than methyl) groups"/>
    <property type="evidence" value="ECO:0007669"/>
    <property type="project" value="UniProtKB-UniRule"/>
</dbReference>
<dbReference type="GO" id="GO:0043828">
    <property type="term" value="F:tRNA 2-selenouridine synthase activity"/>
    <property type="evidence" value="ECO:0007669"/>
    <property type="project" value="UniProtKB-EC"/>
</dbReference>
<dbReference type="GO" id="GO:0002098">
    <property type="term" value="P:tRNA wobble uridine modification"/>
    <property type="evidence" value="ECO:0007669"/>
    <property type="project" value="UniProtKB-UniRule"/>
</dbReference>
<dbReference type="CDD" id="cd01520">
    <property type="entry name" value="RHOD_YbbB"/>
    <property type="match status" value="1"/>
</dbReference>
<dbReference type="FunFam" id="3.40.250.10:FF:000009">
    <property type="entry name" value="tRNA 2-selenouridine/geranyl-2-thiouridine synthase"/>
    <property type="match status" value="1"/>
</dbReference>
<dbReference type="Gene3D" id="3.40.250.10">
    <property type="entry name" value="Rhodanese-like domain"/>
    <property type="match status" value="1"/>
</dbReference>
<dbReference type="HAMAP" id="MF_01622">
    <property type="entry name" value="tRNA_sel_U_synth"/>
    <property type="match status" value="1"/>
</dbReference>
<dbReference type="InterPro" id="IPR001763">
    <property type="entry name" value="Rhodanese-like_dom"/>
</dbReference>
<dbReference type="InterPro" id="IPR036873">
    <property type="entry name" value="Rhodanese-like_dom_sf"/>
</dbReference>
<dbReference type="InterPro" id="IPR017582">
    <property type="entry name" value="SelU"/>
</dbReference>
<dbReference type="NCBIfam" id="NF008749">
    <property type="entry name" value="PRK11784.1-1"/>
    <property type="match status" value="1"/>
</dbReference>
<dbReference type="NCBIfam" id="NF008751">
    <property type="entry name" value="PRK11784.1-3"/>
    <property type="match status" value="1"/>
</dbReference>
<dbReference type="NCBIfam" id="TIGR03167">
    <property type="entry name" value="tRNA_sel_U_synt"/>
    <property type="match status" value="1"/>
</dbReference>
<dbReference type="PANTHER" id="PTHR30401">
    <property type="entry name" value="TRNA 2-SELENOURIDINE SYNTHASE"/>
    <property type="match status" value="1"/>
</dbReference>
<dbReference type="PANTHER" id="PTHR30401:SF0">
    <property type="entry name" value="TRNA 2-SELENOURIDINE SYNTHASE"/>
    <property type="match status" value="1"/>
</dbReference>
<dbReference type="SMART" id="SM00450">
    <property type="entry name" value="RHOD"/>
    <property type="match status" value="1"/>
</dbReference>
<dbReference type="SUPFAM" id="SSF52821">
    <property type="entry name" value="Rhodanese/Cell cycle control phosphatase"/>
    <property type="match status" value="1"/>
</dbReference>
<dbReference type="PROSITE" id="PS50206">
    <property type="entry name" value="RHODANESE_3"/>
    <property type="match status" value="1"/>
</dbReference>
<evidence type="ECO:0000255" key="1">
    <source>
        <dbReference type="HAMAP-Rule" id="MF_01622"/>
    </source>
</evidence>
<proteinExistence type="inferred from homology"/>
<keyword id="KW-1185">Reference proteome</keyword>
<keyword id="KW-0711">Selenium</keyword>
<keyword id="KW-0808">Transferase</keyword>
<organism>
    <name type="scientific">Escherichia coli O45:K1 (strain S88 / ExPEC)</name>
    <dbReference type="NCBI Taxonomy" id="585035"/>
    <lineage>
        <taxon>Bacteria</taxon>
        <taxon>Pseudomonadati</taxon>
        <taxon>Pseudomonadota</taxon>
        <taxon>Gammaproteobacteria</taxon>
        <taxon>Enterobacterales</taxon>
        <taxon>Enterobacteriaceae</taxon>
        <taxon>Escherichia</taxon>
    </lineage>
</organism>
<gene>
    <name evidence="1" type="primary">selU</name>
    <name type="ordered locus">ECS88_0502</name>
</gene>
<protein>
    <recommendedName>
        <fullName evidence="1">tRNA 2-selenouridine synthase</fullName>
        <ecNumber evidence="1">2.9.1.3</ecNumber>
    </recommendedName>
</protein>
<feature type="chain" id="PRO_1000186066" description="tRNA 2-selenouridine synthase">
    <location>
        <begin position="1"/>
        <end position="364"/>
    </location>
</feature>
<feature type="domain" description="Rhodanese" evidence="1">
    <location>
        <begin position="14"/>
        <end position="137"/>
    </location>
</feature>
<feature type="active site" description="S-selanylcysteine intermediate" evidence="1">
    <location>
        <position position="97"/>
    </location>
</feature>